<accession>A7I4X6</accession>
<gene>
    <name evidence="1" type="primary">rps12</name>
    <name type="ordered locus">Mboo_0265</name>
</gene>
<feature type="chain" id="PRO_1000080402" description="Small ribosomal subunit protein uS12">
    <location>
        <begin position="1"/>
        <end position="142"/>
    </location>
</feature>
<keyword id="KW-1185">Reference proteome</keyword>
<keyword id="KW-0687">Ribonucleoprotein</keyword>
<keyword id="KW-0689">Ribosomal protein</keyword>
<keyword id="KW-0694">RNA-binding</keyword>
<keyword id="KW-0699">rRNA-binding</keyword>
<sequence length="142" mass="15812">MGQGKFAARKLVRDSKKFRWSDKNYARRELNLDVKSDPLEGAPQARGIVLEKVGVEAKQPNSAIRKCVRVQLIKNGRQVTAFAVGDGAINFIDEHDEVEIEGIGGRLGRSMGDIPGVRYVVTSVNNVCLHEMVIGRKEKPRR</sequence>
<evidence type="ECO:0000255" key="1">
    <source>
        <dbReference type="HAMAP-Rule" id="MF_00403"/>
    </source>
</evidence>
<evidence type="ECO:0000305" key="2"/>
<comment type="function">
    <text evidence="1">With S4 and S5 plays an important role in translational accuracy. Located at the interface of the 30S and 50S subunits.</text>
</comment>
<comment type="subunit">
    <text evidence="1">Part of the 30S ribosomal subunit.</text>
</comment>
<comment type="similarity">
    <text evidence="1">Belongs to the universal ribosomal protein uS12 family.</text>
</comment>
<dbReference type="EMBL" id="CP000780">
    <property type="protein sequence ID" value="ABS54787.1"/>
    <property type="molecule type" value="Genomic_DNA"/>
</dbReference>
<dbReference type="RefSeq" id="WP_011991275.1">
    <property type="nucleotide sequence ID" value="NC_009712.1"/>
</dbReference>
<dbReference type="SMR" id="A7I4X6"/>
<dbReference type="STRING" id="456442.Mboo_0265"/>
<dbReference type="GeneID" id="5410255"/>
<dbReference type="KEGG" id="mbn:Mboo_0265"/>
<dbReference type="eggNOG" id="arCOG04255">
    <property type="taxonomic scope" value="Archaea"/>
</dbReference>
<dbReference type="HOGENOM" id="CLU_115574_0_1_2"/>
<dbReference type="OrthoDB" id="45154at2157"/>
<dbReference type="Proteomes" id="UP000002408">
    <property type="component" value="Chromosome"/>
</dbReference>
<dbReference type="GO" id="GO:0015935">
    <property type="term" value="C:small ribosomal subunit"/>
    <property type="evidence" value="ECO:0007669"/>
    <property type="project" value="InterPro"/>
</dbReference>
<dbReference type="GO" id="GO:0019843">
    <property type="term" value="F:rRNA binding"/>
    <property type="evidence" value="ECO:0007669"/>
    <property type="project" value="UniProtKB-UniRule"/>
</dbReference>
<dbReference type="GO" id="GO:0003735">
    <property type="term" value="F:structural constituent of ribosome"/>
    <property type="evidence" value="ECO:0007669"/>
    <property type="project" value="InterPro"/>
</dbReference>
<dbReference type="GO" id="GO:0006412">
    <property type="term" value="P:translation"/>
    <property type="evidence" value="ECO:0007669"/>
    <property type="project" value="UniProtKB-UniRule"/>
</dbReference>
<dbReference type="CDD" id="cd03367">
    <property type="entry name" value="Ribosomal_S23"/>
    <property type="match status" value="1"/>
</dbReference>
<dbReference type="FunFam" id="2.40.50.140:FF:000007">
    <property type="entry name" value="40S ribosomal protein S23"/>
    <property type="match status" value="1"/>
</dbReference>
<dbReference type="Gene3D" id="2.40.50.140">
    <property type="entry name" value="Nucleic acid-binding proteins"/>
    <property type="match status" value="1"/>
</dbReference>
<dbReference type="HAMAP" id="MF_00403_A">
    <property type="entry name" value="Ribosomal_uS12_A"/>
    <property type="match status" value="1"/>
</dbReference>
<dbReference type="InterPro" id="IPR012340">
    <property type="entry name" value="NA-bd_OB-fold"/>
</dbReference>
<dbReference type="InterPro" id="IPR006032">
    <property type="entry name" value="Ribosomal_uS12"/>
</dbReference>
<dbReference type="InterPro" id="IPR022863">
    <property type="entry name" value="Ribosomal_uS12_arc"/>
</dbReference>
<dbReference type="InterPro" id="IPR005680">
    <property type="entry name" value="Ribosomal_uS12_euk/arc"/>
</dbReference>
<dbReference type="NCBIfam" id="NF003254">
    <property type="entry name" value="PRK04211.1"/>
    <property type="match status" value="1"/>
</dbReference>
<dbReference type="NCBIfam" id="TIGR00982">
    <property type="entry name" value="uS12_E_A"/>
    <property type="match status" value="1"/>
</dbReference>
<dbReference type="PANTHER" id="PTHR11652">
    <property type="entry name" value="30S RIBOSOMAL PROTEIN S12 FAMILY MEMBER"/>
    <property type="match status" value="1"/>
</dbReference>
<dbReference type="Pfam" id="PF00164">
    <property type="entry name" value="Ribosom_S12_S23"/>
    <property type="match status" value="1"/>
</dbReference>
<dbReference type="PIRSF" id="PIRSF002133">
    <property type="entry name" value="Ribosomal_S12/S23"/>
    <property type="match status" value="1"/>
</dbReference>
<dbReference type="SUPFAM" id="SSF50249">
    <property type="entry name" value="Nucleic acid-binding proteins"/>
    <property type="match status" value="1"/>
</dbReference>
<dbReference type="PROSITE" id="PS00055">
    <property type="entry name" value="RIBOSOMAL_S12"/>
    <property type="match status" value="1"/>
</dbReference>
<organism>
    <name type="scientific">Methanoregula boonei (strain DSM 21154 / JCM 14090 / 6A8)</name>
    <dbReference type="NCBI Taxonomy" id="456442"/>
    <lineage>
        <taxon>Archaea</taxon>
        <taxon>Methanobacteriati</taxon>
        <taxon>Methanobacteriota</taxon>
        <taxon>Stenosarchaea group</taxon>
        <taxon>Methanomicrobia</taxon>
        <taxon>Methanomicrobiales</taxon>
        <taxon>Methanoregulaceae</taxon>
        <taxon>Methanoregula</taxon>
    </lineage>
</organism>
<proteinExistence type="inferred from homology"/>
<name>RS12_METB6</name>
<reference key="1">
    <citation type="journal article" date="2015" name="Microbiology">
        <title>Genome of Methanoregula boonei 6A8 reveals adaptations to oligotrophic peatland environments.</title>
        <authorList>
            <person name="Braeuer S."/>
            <person name="Cadillo-Quiroz H."/>
            <person name="Kyrpides N."/>
            <person name="Woyke T."/>
            <person name="Goodwin L."/>
            <person name="Detter C."/>
            <person name="Podell S."/>
            <person name="Yavitt J.B."/>
            <person name="Zinder S.H."/>
        </authorList>
    </citation>
    <scope>NUCLEOTIDE SEQUENCE [LARGE SCALE GENOMIC DNA]</scope>
    <source>
        <strain>DSM 21154 / JCM 14090 / 6A8</strain>
    </source>
</reference>
<protein>
    <recommendedName>
        <fullName evidence="1">Small ribosomal subunit protein uS12</fullName>
    </recommendedName>
    <alternativeName>
        <fullName evidence="2">30S ribosomal protein S12</fullName>
    </alternativeName>
</protein>